<evidence type="ECO:0000255" key="1">
    <source>
        <dbReference type="HAMAP-Rule" id="MF_01114"/>
    </source>
</evidence>
<reference key="1">
    <citation type="journal article" date="2008" name="PLoS ONE">
        <title>Genome sequence of a lancefield group C Streptococcus zooepidemicus strain causing epidemic nephritis: new information about an old disease.</title>
        <authorList>
            <person name="Beres S.B."/>
            <person name="Sesso R."/>
            <person name="Pinto S.W.L."/>
            <person name="Hoe N.P."/>
            <person name="Porcella S.F."/>
            <person name="Deleo F.R."/>
            <person name="Musser J.M."/>
        </authorList>
    </citation>
    <scope>NUCLEOTIDE SEQUENCE [LARGE SCALE GENOMIC DNA]</scope>
    <source>
        <strain>MGCS10565</strain>
    </source>
</reference>
<gene>
    <name evidence="1" type="primary">recX</name>
    <name type="ordered locus">Sez_1541</name>
</gene>
<keyword id="KW-0963">Cytoplasm</keyword>
<sequence length="258" mass="30001">MKISQIEKKKHLYLIKLDNGDNLTVTEDTIIRFMLSKHMVIDSQQWEDIKSFAQFSYGKSKALGFIAFQQRSQKQVQDYLLKHQISPDLIPSIIDSLKQGKWIDDQQYVDTYVRQNSLTGDKGPLLLKQKLMLKGIASQLIEPVLAQTDFSSIAQKAAEKIYQKYQHKLPSKALTDKIIQGLLNKGFSYDLAKGIVSQLSLEQDSQHIEDLLDQEFDKLLRKYSRRYDGYQLKQKLYQALYRKGYDSDDITTKLNDYF</sequence>
<organism>
    <name type="scientific">Streptococcus equi subsp. zooepidemicus (strain MGCS10565)</name>
    <dbReference type="NCBI Taxonomy" id="552526"/>
    <lineage>
        <taxon>Bacteria</taxon>
        <taxon>Bacillati</taxon>
        <taxon>Bacillota</taxon>
        <taxon>Bacilli</taxon>
        <taxon>Lactobacillales</taxon>
        <taxon>Streptococcaceae</taxon>
        <taxon>Streptococcus</taxon>
    </lineage>
</organism>
<feature type="chain" id="PRO_1000137195" description="Regulatory protein RecX">
    <location>
        <begin position="1"/>
        <end position="258"/>
    </location>
</feature>
<protein>
    <recommendedName>
        <fullName evidence="1">Regulatory protein RecX</fullName>
    </recommendedName>
</protein>
<proteinExistence type="inferred from homology"/>
<comment type="function">
    <text evidence="1">Modulates RecA activity.</text>
</comment>
<comment type="subcellular location">
    <subcellularLocation>
        <location evidence="1">Cytoplasm</location>
    </subcellularLocation>
</comment>
<comment type="similarity">
    <text evidence="1">Belongs to the RecX family.</text>
</comment>
<name>RECX_STREM</name>
<dbReference type="EMBL" id="CP001129">
    <property type="protein sequence ID" value="ACG62874.1"/>
    <property type="molecule type" value="Genomic_DNA"/>
</dbReference>
<dbReference type="RefSeq" id="WP_012516130.1">
    <property type="nucleotide sequence ID" value="NC_011134.1"/>
</dbReference>
<dbReference type="SMR" id="B4U4F7"/>
<dbReference type="KEGG" id="sez:Sez_1541"/>
<dbReference type="HOGENOM" id="CLU_066607_4_0_9"/>
<dbReference type="Proteomes" id="UP000001873">
    <property type="component" value="Chromosome"/>
</dbReference>
<dbReference type="GO" id="GO:0005737">
    <property type="term" value="C:cytoplasm"/>
    <property type="evidence" value="ECO:0007669"/>
    <property type="project" value="UniProtKB-SubCell"/>
</dbReference>
<dbReference type="GO" id="GO:0006282">
    <property type="term" value="P:regulation of DNA repair"/>
    <property type="evidence" value="ECO:0007669"/>
    <property type="project" value="UniProtKB-UniRule"/>
</dbReference>
<dbReference type="Gene3D" id="1.10.10.10">
    <property type="entry name" value="Winged helix-like DNA-binding domain superfamily/Winged helix DNA-binding domain"/>
    <property type="match status" value="4"/>
</dbReference>
<dbReference type="HAMAP" id="MF_01114">
    <property type="entry name" value="RecX"/>
    <property type="match status" value="1"/>
</dbReference>
<dbReference type="InterPro" id="IPR053926">
    <property type="entry name" value="RecX_HTH_1st"/>
</dbReference>
<dbReference type="InterPro" id="IPR053924">
    <property type="entry name" value="RecX_HTH_2nd"/>
</dbReference>
<dbReference type="InterPro" id="IPR053925">
    <property type="entry name" value="RecX_HTH_3rd"/>
</dbReference>
<dbReference type="InterPro" id="IPR003783">
    <property type="entry name" value="Regulatory_RecX"/>
</dbReference>
<dbReference type="InterPro" id="IPR036388">
    <property type="entry name" value="WH-like_DNA-bd_sf"/>
</dbReference>
<dbReference type="NCBIfam" id="NF010733">
    <property type="entry name" value="PRK14135.1"/>
    <property type="match status" value="1"/>
</dbReference>
<dbReference type="PANTHER" id="PTHR33602">
    <property type="entry name" value="REGULATORY PROTEIN RECX FAMILY PROTEIN"/>
    <property type="match status" value="1"/>
</dbReference>
<dbReference type="PANTHER" id="PTHR33602:SF1">
    <property type="entry name" value="REGULATORY PROTEIN RECX FAMILY PROTEIN"/>
    <property type="match status" value="1"/>
</dbReference>
<dbReference type="Pfam" id="PF21982">
    <property type="entry name" value="RecX_HTH1"/>
    <property type="match status" value="1"/>
</dbReference>
<dbReference type="Pfam" id="PF02631">
    <property type="entry name" value="RecX_HTH2"/>
    <property type="match status" value="1"/>
</dbReference>
<dbReference type="Pfam" id="PF21981">
    <property type="entry name" value="RecX_HTH3"/>
    <property type="match status" value="2"/>
</dbReference>
<accession>B4U4F7</accession>